<evidence type="ECO:0000255" key="1">
    <source>
        <dbReference type="HAMAP-Rule" id="MF_01038"/>
    </source>
</evidence>
<sequence length="531" mass="60125">MKVKRPVLLAILDGWGISEPDKGNAVDNANMVFVEYLKKTYPWLKAHASGKWVGLPENQMGNSEVGHIHLGAGRINLESLAKLNHETKTNNIAKNDEIVKTFEYVKKNNSALHLMGLFSNGGVHSHFDHMIAIYKAAIDYGITNIKFDLITDGRDTKPKLAYDFIKDLLELIKQNNNIGIISSISGRYYAMDRDKRFDRSRIAYNAIVNRNNVRSFTNILDYIQQEYMINHDDEMIIPAFNQDDLNGNLKANDAIIMTNFRPDRAIQISSILTNKNYIAWQNEAFSDAEFIGDKIRFVSMMKYSDSVTSPHIAYPPKPLTNTLGQYLSQLGLKQLRIAETEKIAHVTFFFDGGNDYFKNGLAKNDEITLANAYIDLIPSAKVATYDLKPQMSAVEITDKLLEEIKKDEFDFIVLNFANCDMVGHTGNNKATEIACKTLDEQLKRIHEEFVLRHNGIMVITADHGNAEIMIDKDGQVNKKHTTSLVPIIITDLNIKLKQNDPEIAKVAPTILDLMNIEIPKEMELESMIDHN</sequence>
<keyword id="KW-0324">Glycolysis</keyword>
<keyword id="KW-0413">Isomerase</keyword>
<keyword id="KW-0464">Manganese</keyword>
<keyword id="KW-0479">Metal-binding</keyword>
<keyword id="KW-1185">Reference proteome</keyword>
<gene>
    <name evidence="1" type="primary">gpmI</name>
    <name type="synonym">gpm</name>
    <name type="ordered locus">MSC_0825</name>
</gene>
<accession>Q6MSF0</accession>
<reference key="1">
    <citation type="journal article" date="2004" name="Genome Res.">
        <title>The genome sequence of Mycoplasma mycoides subsp. mycoides SC type strain PG1T, the causative agent of contagious bovine pleuropneumonia (CBPP).</title>
        <authorList>
            <person name="Westberg J."/>
            <person name="Persson A."/>
            <person name="Holmberg A."/>
            <person name="Goesmann A."/>
            <person name="Lundeberg J."/>
            <person name="Johansson K.-E."/>
            <person name="Pettersson B."/>
            <person name="Uhlen M."/>
        </authorList>
    </citation>
    <scope>NUCLEOTIDE SEQUENCE [LARGE SCALE GENOMIC DNA]</scope>
    <source>
        <strain>CCUG 32753 / NCTC 10114 / PG1</strain>
    </source>
</reference>
<name>GPMI_MYCMS</name>
<comment type="function">
    <text evidence="1">Catalyzes the interconversion of 2-phosphoglycerate and 3-phosphoglycerate.</text>
</comment>
<comment type="catalytic activity">
    <reaction evidence="1">
        <text>(2R)-2-phosphoglycerate = (2R)-3-phosphoglycerate</text>
        <dbReference type="Rhea" id="RHEA:15901"/>
        <dbReference type="ChEBI" id="CHEBI:58272"/>
        <dbReference type="ChEBI" id="CHEBI:58289"/>
        <dbReference type="EC" id="5.4.2.12"/>
    </reaction>
</comment>
<comment type="cofactor">
    <cofactor evidence="1">
        <name>Mn(2+)</name>
        <dbReference type="ChEBI" id="CHEBI:29035"/>
    </cofactor>
    <text evidence="1">Binds 2 manganese ions per subunit.</text>
</comment>
<comment type="pathway">
    <text evidence="1">Carbohydrate degradation; glycolysis; pyruvate from D-glyceraldehyde 3-phosphate: step 3/5.</text>
</comment>
<comment type="subunit">
    <text evidence="1">Monomer.</text>
</comment>
<comment type="similarity">
    <text evidence="1">Belongs to the BPG-independent phosphoglycerate mutase family.</text>
</comment>
<feature type="chain" id="PRO_0000212173" description="2,3-bisphosphoglycerate-independent phosphoglycerate mutase">
    <location>
        <begin position="1"/>
        <end position="531"/>
    </location>
</feature>
<feature type="active site" description="Phosphoserine intermediate" evidence="1">
    <location>
        <position position="63"/>
    </location>
</feature>
<feature type="binding site" evidence="1">
    <location>
        <position position="13"/>
    </location>
    <ligand>
        <name>Mn(2+)</name>
        <dbReference type="ChEBI" id="CHEBI:29035"/>
        <label>2</label>
    </ligand>
</feature>
<feature type="binding site" evidence="1">
    <location>
        <position position="63"/>
    </location>
    <ligand>
        <name>Mn(2+)</name>
        <dbReference type="ChEBI" id="CHEBI:29035"/>
        <label>2</label>
    </ligand>
</feature>
<feature type="binding site" evidence="1">
    <location>
        <position position="124"/>
    </location>
    <ligand>
        <name>substrate</name>
    </ligand>
</feature>
<feature type="binding site" evidence="1">
    <location>
        <begin position="154"/>
        <end position="155"/>
    </location>
    <ligand>
        <name>substrate</name>
    </ligand>
</feature>
<feature type="binding site" evidence="1">
    <location>
        <position position="187"/>
    </location>
    <ligand>
        <name>substrate</name>
    </ligand>
</feature>
<feature type="binding site" evidence="1">
    <location>
        <position position="193"/>
    </location>
    <ligand>
        <name>substrate</name>
    </ligand>
</feature>
<feature type="binding site" evidence="1">
    <location>
        <begin position="261"/>
        <end position="264"/>
    </location>
    <ligand>
        <name>substrate</name>
    </ligand>
</feature>
<feature type="binding site" evidence="1">
    <location>
        <position position="342"/>
    </location>
    <ligand>
        <name>substrate</name>
    </ligand>
</feature>
<feature type="binding site" evidence="1">
    <location>
        <position position="420"/>
    </location>
    <ligand>
        <name>Mn(2+)</name>
        <dbReference type="ChEBI" id="CHEBI:29035"/>
        <label>1</label>
    </ligand>
</feature>
<feature type="binding site" evidence="1">
    <location>
        <position position="424"/>
    </location>
    <ligand>
        <name>Mn(2+)</name>
        <dbReference type="ChEBI" id="CHEBI:29035"/>
        <label>1</label>
    </ligand>
</feature>
<feature type="binding site" evidence="1">
    <location>
        <position position="462"/>
    </location>
    <ligand>
        <name>Mn(2+)</name>
        <dbReference type="ChEBI" id="CHEBI:29035"/>
        <label>2</label>
    </ligand>
</feature>
<feature type="binding site" evidence="1">
    <location>
        <position position="463"/>
    </location>
    <ligand>
        <name>Mn(2+)</name>
        <dbReference type="ChEBI" id="CHEBI:29035"/>
        <label>2</label>
    </ligand>
</feature>
<feature type="binding site" evidence="1">
    <location>
        <position position="480"/>
    </location>
    <ligand>
        <name>Mn(2+)</name>
        <dbReference type="ChEBI" id="CHEBI:29035"/>
        <label>1</label>
    </ligand>
</feature>
<proteinExistence type="inferred from homology"/>
<organism>
    <name type="scientific">Mycoplasma mycoides subsp. mycoides SC (strain CCUG 32753 / NCTC 10114 / PG1)</name>
    <dbReference type="NCBI Taxonomy" id="272632"/>
    <lineage>
        <taxon>Bacteria</taxon>
        <taxon>Bacillati</taxon>
        <taxon>Mycoplasmatota</taxon>
        <taxon>Mollicutes</taxon>
        <taxon>Mycoplasmataceae</taxon>
        <taxon>Mycoplasma</taxon>
    </lineage>
</organism>
<dbReference type="EC" id="5.4.2.12" evidence="1"/>
<dbReference type="EMBL" id="BX293980">
    <property type="protein sequence ID" value="CAE77440.1"/>
    <property type="molecule type" value="Genomic_DNA"/>
</dbReference>
<dbReference type="RefSeq" id="NP_975798.1">
    <property type="nucleotide sequence ID" value="NC_005364.2"/>
</dbReference>
<dbReference type="RefSeq" id="WP_011166985.1">
    <property type="nucleotide sequence ID" value="NC_005364.2"/>
</dbReference>
<dbReference type="SMR" id="Q6MSF0"/>
<dbReference type="STRING" id="272632.MSC_0825"/>
<dbReference type="KEGG" id="mmy:MSC_0825"/>
<dbReference type="PATRIC" id="fig|272632.4.peg.887"/>
<dbReference type="eggNOG" id="COG0696">
    <property type="taxonomic scope" value="Bacteria"/>
</dbReference>
<dbReference type="HOGENOM" id="CLU_026099_2_0_14"/>
<dbReference type="UniPathway" id="UPA00109">
    <property type="reaction ID" value="UER00186"/>
</dbReference>
<dbReference type="Proteomes" id="UP000001016">
    <property type="component" value="Chromosome"/>
</dbReference>
<dbReference type="GO" id="GO:0005829">
    <property type="term" value="C:cytosol"/>
    <property type="evidence" value="ECO:0007669"/>
    <property type="project" value="TreeGrafter"/>
</dbReference>
<dbReference type="GO" id="GO:0030145">
    <property type="term" value="F:manganese ion binding"/>
    <property type="evidence" value="ECO:0007669"/>
    <property type="project" value="UniProtKB-UniRule"/>
</dbReference>
<dbReference type="GO" id="GO:0004619">
    <property type="term" value="F:phosphoglycerate mutase activity"/>
    <property type="evidence" value="ECO:0007669"/>
    <property type="project" value="UniProtKB-EC"/>
</dbReference>
<dbReference type="GO" id="GO:0006007">
    <property type="term" value="P:glucose catabolic process"/>
    <property type="evidence" value="ECO:0007669"/>
    <property type="project" value="InterPro"/>
</dbReference>
<dbReference type="GO" id="GO:0006096">
    <property type="term" value="P:glycolytic process"/>
    <property type="evidence" value="ECO:0007669"/>
    <property type="project" value="UniProtKB-UniRule"/>
</dbReference>
<dbReference type="CDD" id="cd16010">
    <property type="entry name" value="iPGM"/>
    <property type="match status" value="1"/>
</dbReference>
<dbReference type="FunFam" id="3.40.1450.10:FF:000002">
    <property type="entry name" value="2,3-bisphosphoglycerate-independent phosphoglycerate mutase"/>
    <property type="match status" value="1"/>
</dbReference>
<dbReference type="Gene3D" id="3.40.720.10">
    <property type="entry name" value="Alkaline Phosphatase, subunit A"/>
    <property type="match status" value="1"/>
</dbReference>
<dbReference type="Gene3D" id="3.40.1450.10">
    <property type="entry name" value="BPG-independent phosphoglycerate mutase, domain B"/>
    <property type="match status" value="1"/>
</dbReference>
<dbReference type="HAMAP" id="MF_01038">
    <property type="entry name" value="GpmI"/>
    <property type="match status" value="1"/>
</dbReference>
<dbReference type="InterPro" id="IPR017850">
    <property type="entry name" value="Alkaline_phosphatase_core_sf"/>
</dbReference>
<dbReference type="InterPro" id="IPR011258">
    <property type="entry name" value="BPG-indep_PGM_N"/>
</dbReference>
<dbReference type="InterPro" id="IPR006124">
    <property type="entry name" value="Metalloenzyme"/>
</dbReference>
<dbReference type="InterPro" id="IPR036646">
    <property type="entry name" value="PGAM_B_sf"/>
</dbReference>
<dbReference type="InterPro" id="IPR005995">
    <property type="entry name" value="Pgm_bpd_ind"/>
</dbReference>
<dbReference type="NCBIfam" id="TIGR01307">
    <property type="entry name" value="pgm_bpd_ind"/>
    <property type="match status" value="1"/>
</dbReference>
<dbReference type="PANTHER" id="PTHR31637">
    <property type="entry name" value="2,3-BISPHOSPHOGLYCERATE-INDEPENDENT PHOSPHOGLYCERATE MUTASE"/>
    <property type="match status" value="1"/>
</dbReference>
<dbReference type="PANTHER" id="PTHR31637:SF0">
    <property type="entry name" value="2,3-BISPHOSPHOGLYCERATE-INDEPENDENT PHOSPHOGLYCERATE MUTASE"/>
    <property type="match status" value="1"/>
</dbReference>
<dbReference type="Pfam" id="PF06415">
    <property type="entry name" value="iPGM_N"/>
    <property type="match status" value="1"/>
</dbReference>
<dbReference type="Pfam" id="PF01676">
    <property type="entry name" value="Metalloenzyme"/>
    <property type="match status" value="1"/>
</dbReference>
<dbReference type="PIRSF" id="PIRSF001492">
    <property type="entry name" value="IPGAM"/>
    <property type="match status" value="1"/>
</dbReference>
<dbReference type="SUPFAM" id="SSF64158">
    <property type="entry name" value="2,3-Bisphosphoglycerate-independent phosphoglycerate mutase, substrate-binding domain"/>
    <property type="match status" value="1"/>
</dbReference>
<dbReference type="SUPFAM" id="SSF53649">
    <property type="entry name" value="Alkaline phosphatase-like"/>
    <property type="match status" value="1"/>
</dbReference>
<protein>
    <recommendedName>
        <fullName evidence="1">2,3-bisphosphoglycerate-independent phosphoglycerate mutase</fullName>
        <shortName evidence="1">BPG-independent PGAM</shortName>
        <shortName evidence="1">Phosphoglyceromutase</shortName>
        <shortName evidence="1">iPGM</shortName>
        <ecNumber evidence="1">5.4.2.12</ecNumber>
    </recommendedName>
</protein>